<protein>
    <recommendedName>
        <fullName>Ras-related protein Rab-5B</fullName>
        <ecNumber evidence="1">3.6.5.2</ecNumber>
    </recommendedName>
</protein>
<gene>
    <name evidence="6" type="primary">Rab5b</name>
</gene>
<accession>P61021</accession>
<accession>P35239</accession>
<accession>P35277</accession>
<feature type="initiator methionine" description="Removed" evidence="2">
    <location>
        <position position="1"/>
    </location>
</feature>
<feature type="chain" id="PRO_0000121108" description="Ras-related protein Rab-5B">
    <location>
        <begin position="2"/>
        <end position="215"/>
    </location>
</feature>
<feature type="region of interest" description="Disordered" evidence="3">
    <location>
        <begin position="186"/>
        <end position="215"/>
    </location>
</feature>
<feature type="short sequence motif" description="Switch 1" evidence="1">
    <location>
        <begin position="44"/>
        <end position="56"/>
    </location>
</feature>
<feature type="short sequence motif" description="Switch 2" evidence="1">
    <location>
        <begin position="77"/>
        <end position="93"/>
    </location>
</feature>
<feature type="compositionally biased region" description="Low complexity" evidence="3">
    <location>
        <begin position="204"/>
        <end position="215"/>
    </location>
</feature>
<feature type="binding site" evidence="1">
    <location>
        <position position="29"/>
    </location>
    <ligand>
        <name>GTP</name>
        <dbReference type="ChEBI" id="CHEBI:37565"/>
    </ligand>
</feature>
<feature type="binding site" evidence="1">
    <location>
        <position position="30"/>
    </location>
    <ligand>
        <name>GTP</name>
        <dbReference type="ChEBI" id="CHEBI:37565"/>
    </ligand>
</feature>
<feature type="binding site" evidence="1">
    <location>
        <position position="32"/>
    </location>
    <ligand>
        <name>GTP</name>
        <dbReference type="ChEBI" id="CHEBI:37565"/>
    </ligand>
</feature>
<feature type="binding site" evidence="1">
    <location>
        <position position="33"/>
    </location>
    <ligand>
        <name>GTP</name>
        <dbReference type="ChEBI" id="CHEBI:37565"/>
    </ligand>
</feature>
<feature type="binding site" evidence="1">
    <location>
        <position position="34"/>
    </location>
    <ligand>
        <name>GTP</name>
        <dbReference type="ChEBI" id="CHEBI:37565"/>
    </ligand>
</feature>
<feature type="binding site" evidence="1">
    <location>
        <position position="34"/>
    </location>
    <ligand>
        <name>Mg(2+)</name>
        <dbReference type="ChEBI" id="CHEBI:18420"/>
    </ligand>
</feature>
<feature type="binding site" evidence="1">
    <location>
        <position position="35"/>
    </location>
    <ligand>
        <name>GTP</name>
        <dbReference type="ChEBI" id="CHEBI:37565"/>
    </ligand>
</feature>
<feature type="binding site" evidence="1">
    <location>
        <position position="46"/>
    </location>
    <ligand>
        <name>GTP</name>
        <dbReference type="ChEBI" id="CHEBI:37565"/>
    </ligand>
</feature>
<feature type="binding site" evidence="1">
    <location>
        <position position="47"/>
    </location>
    <ligand>
        <name>GTP</name>
        <dbReference type="ChEBI" id="CHEBI:37565"/>
    </ligand>
</feature>
<feature type="binding site" evidence="1">
    <location>
        <position position="52"/>
    </location>
    <ligand>
        <name>GTP</name>
        <dbReference type="ChEBI" id="CHEBI:37565"/>
    </ligand>
</feature>
<feature type="binding site" evidence="1">
    <location>
        <position position="52"/>
    </location>
    <ligand>
        <name>Mg(2+)</name>
        <dbReference type="ChEBI" id="CHEBI:18420"/>
    </ligand>
</feature>
<feature type="binding site" evidence="1">
    <location>
        <position position="78"/>
    </location>
    <ligand>
        <name>GTP</name>
        <dbReference type="ChEBI" id="CHEBI:37565"/>
    </ligand>
</feature>
<feature type="binding site" evidence="1">
    <location>
        <position position="133"/>
    </location>
    <ligand>
        <name>GTP</name>
        <dbReference type="ChEBI" id="CHEBI:37565"/>
    </ligand>
</feature>
<feature type="binding site" evidence="1">
    <location>
        <position position="134"/>
    </location>
    <ligand>
        <name>GTP</name>
        <dbReference type="ChEBI" id="CHEBI:37565"/>
    </ligand>
</feature>
<feature type="binding site" evidence="1">
    <location>
        <position position="136"/>
    </location>
    <ligand>
        <name>GTP</name>
        <dbReference type="ChEBI" id="CHEBI:37565"/>
    </ligand>
</feature>
<feature type="binding site" evidence="1">
    <location>
        <position position="164"/>
    </location>
    <ligand>
        <name>GTP</name>
        <dbReference type="ChEBI" id="CHEBI:37565"/>
    </ligand>
</feature>
<feature type="binding site" evidence="1">
    <location>
        <position position="165"/>
    </location>
    <ligand>
        <name>GTP</name>
        <dbReference type="ChEBI" id="CHEBI:37565"/>
    </ligand>
</feature>
<feature type="modified residue" description="N-acetylthreonine" evidence="2">
    <location>
        <position position="2"/>
    </location>
</feature>
<feature type="modified residue" description="Phosphoserine" evidence="2">
    <location>
        <position position="84"/>
    </location>
</feature>
<feature type="lipid moiety-binding region" description="S-geranylgeranyl cysteine" evidence="1">
    <location>
        <position position="212"/>
    </location>
</feature>
<feature type="lipid moiety-binding region" description="S-geranylgeranyl cysteine" evidence="1">
    <location>
        <position position="213"/>
    </location>
</feature>
<feature type="sequence conflict" description="In Ref. 3; AAK14835." evidence="4" ref="3">
    <original>A</original>
    <variation>G</variation>
    <location>
        <position position="56"/>
    </location>
</feature>
<comment type="function">
    <text evidence="1">The small GTPases Rab are key regulators of intracellular membrane trafficking, from the formation of transport vesicles to their fusion with membranes. Rabs cycle between an inactive GDP-bound form and an active GTP-bound form that is able to recruit to membranes different sets of downstream effectors directly responsible for vesicle formation, movement, tethering and fusion.</text>
</comment>
<comment type="catalytic activity">
    <reaction evidence="1">
        <text>GTP + H2O = GDP + phosphate + H(+)</text>
        <dbReference type="Rhea" id="RHEA:19669"/>
        <dbReference type="ChEBI" id="CHEBI:15377"/>
        <dbReference type="ChEBI" id="CHEBI:15378"/>
        <dbReference type="ChEBI" id="CHEBI:37565"/>
        <dbReference type="ChEBI" id="CHEBI:43474"/>
        <dbReference type="ChEBI" id="CHEBI:58189"/>
        <dbReference type="EC" id="3.6.5.2"/>
    </reaction>
    <physiologicalReaction direction="left-to-right" evidence="1">
        <dbReference type="Rhea" id="RHEA:19670"/>
    </physiologicalReaction>
</comment>
<comment type="cofactor">
    <cofactor evidence="1">
        <name>Mg(2+)</name>
        <dbReference type="ChEBI" id="CHEBI:18420"/>
    </cofactor>
</comment>
<comment type="activity regulation">
    <text evidence="4">Regulated by guanine nucleotide exchange factors (GEFs) which promote the exchange of bound GDP for free GTP (Probable). Regulated by GTPase activating proteins (GAPs) which increase the GTP hydrolysis activity (Probable). Inhibited by GDP dissociation inhibitors (GDIs) (Probable).</text>
</comment>
<comment type="subunit">
    <text evidence="2">Binds EEA1. Interacts with RIN2 and RIN3, which probably regulate its pathway, possibly by acting as GEFs (By similarity). Interacts with GDI1, GDI2, CHML and CHM; phosphorylation at Ser-84 disrupts this interaction (By similarity).</text>
</comment>
<comment type="interaction">
    <interactant intactId="EBI-8320093">
        <id>P61021</id>
    </interactant>
    <interactant intactId="EBI-5323863">
        <id>Q5S007</id>
        <label>LRRK2</label>
    </interactant>
    <organismsDiffer>true</organismsDiffer>
    <experiments>2</experiments>
</comment>
<comment type="subcellular location">
    <subcellularLocation>
        <location evidence="2">Cell membrane</location>
        <topology evidence="2">Lipid-anchor</topology>
        <orientation evidence="2">Cytoplasmic side</orientation>
    </subcellularLocation>
    <subcellularLocation>
        <location evidence="5">Early endosome membrane</location>
        <topology evidence="2">Lipid-anchor</topology>
    </subcellularLocation>
    <subcellularLocation>
        <location evidence="2">Melanosome</location>
    </subcellularLocation>
</comment>
<comment type="domain">
    <text evidence="1">Switch 1, switch 2 and the interswitch regions are characteristic of Rab GTPases and mediate the interactions with Rab downstream effectors. The switch regions undergo conformational changes upon nucleotide binding which drive interaction with specific sets of effector proteins, with most effectors only binding to GTP-bound Rab.</text>
</comment>
<comment type="PTM">
    <text evidence="2">Phosphorylation of Ser-84 in the switch II region by LRRK2 prevents the association of RAB regulatory proteins, including CHM, CHML and RAB GDP dissociation inhibitors GDI1 and GDI2.</text>
</comment>
<comment type="similarity">
    <text evidence="4">Belongs to the small GTPase superfamily. Rab family.</text>
</comment>
<name>RAB5B_MOUSE</name>
<keyword id="KW-0007">Acetylation</keyword>
<keyword id="KW-1003">Cell membrane</keyword>
<keyword id="KW-0903">Direct protein sequencing</keyword>
<keyword id="KW-0967">Endosome</keyword>
<keyword id="KW-0342">GTP-binding</keyword>
<keyword id="KW-0378">Hydrolase</keyword>
<keyword id="KW-0449">Lipoprotein</keyword>
<keyword id="KW-0460">Magnesium</keyword>
<keyword id="KW-0472">Membrane</keyword>
<keyword id="KW-0479">Metal-binding</keyword>
<keyword id="KW-0547">Nucleotide-binding</keyword>
<keyword id="KW-0597">Phosphoprotein</keyword>
<keyword id="KW-0636">Prenylation</keyword>
<keyword id="KW-0653">Protein transport</keyword>
<keyword id="KW-1185">Reference proteome</keyword>
<keyword id="KW-0813">Transport</keyword>
<dbReference type="EC" id="3.6.5.2" evidence="1"/>
<dbReference type="EMBL" id="X84239">
    <property type="protein sequence ID" value="CAA59016.1"/>
    <property type="molecule type" value="mRNA"/>
</dbReference>
<dbReference type="EMBL" id="AK081251">
    <property type="protein sequence ID" value="BAC38176.1"/>
    <property type="molecule type" value="mRNA"/>
</dbReference>
<dbReference type="EMBL" id="M79311">
    <property type="protein sequence ID" value="AAK14835.1"/>
    <property type="molecule type" value="mRNA"/>
</dbReference>
<dbReference type="CCDS" id="CCDS24287.1"/>
<dbReference type="PIR" id="JH0640">
    <property type="entry name" value="JH0640"/>
</dbReference>
<dbReference type="PIR" id="S65932">
    <property type="entry name" value="S65932"/>
</dbReference>
<dbReference type="RefSeq" id="NP_001415707.1">
    <property type="nucleotide sequence ID" value="NM_001428778.1"/>
</dbReference>
<dbReference type="RefSeq" id="NP_803130.1">
    <property type="nucleotide sequence ID" value="NM_177411.5"/>
</dbReference>
<dbReference type="RefSeq" id="XP_006513447.1">
    <property type="nucleotide sequence ID" value="XM_006513384.3"/>
</dbReference>
<dbReference type="SMR" id="P61021"/>
<dbReference type="BioGRID" id="202548">
    <property type="interactions" value="25"/>
</dbReference>
<dbReference type="FunCoup" id="P61021">
    <property type="interactions" value="4284"/>
</dbReference>
<dbReference type="IntAct" id="P61021">
    <property type="interactions" value="26"/>
</dbReference>
<dbReference type="STRING" id="10090.ENSMUSP00000000727"/>
<dbReference type="GlyGen" id="P61021">
    <property type="glycosylation" value="1 site, 1 O-linked glycan (1 site)"/>
</dbReference>
<dbReference type="iPTMnet" id="P61021"/>
<dbReference type="PhosphoSitePlus" id="P61021"/>
<dbReference type="SwissPalm" id="P61021"/>
<dbReference type="jPOST" id="P61021"/>
<dbReference type="PaxDb" id="10090-ENSMUSP00000000727"/>
<dbReference type="ProteomicsDB" id="300382"/>
<dbReference type="Pumba" id="P61021"/>
<dbReference type="Antibodypedia" id="4131">
    <property type="antibodies" value="176 antibodies from 33 providers"/>
</dbReference>
<dbReference type="DNASU" id="19344"/>
<dbReference type="Ensembl" id="ENSMUST00000000727.4">
    <property type="protein sequence ID" value="ENSMUSP00000000727.3"/>
    <property type="gene ID" value="ENSMUSG00000000711.4"/>
</dbReference>
<dbReference type="GeneID" id="19344"/>
<dbReference type="KEGG" id="mmu:19344"/>
<dbReference type="UCSC" id="uc007hnv.2">
    <property type="organism name" value="mouse"/>
</dbReference>
<dbReference type="AGR" id="MGI:105938"/>
<dbReference type="CTD" id="5869"/>
<dbReference type="MGI" id="MGI:105938">
    <property type="gene designation" value="Rab5b"/>
</dbReference>
<dbReference type="VEuPathDB" id="HostDB:ENSMUSG00000000711"/>
<dbReference type="eggNOG" id="KOG0092">
    <property type="taxonomic scope" value="Eukaryota"/>
</dbReference>
<dbReference type="GeneTree" id="ENSGT00940000160756"/>
<dbReference type="HOGENOM" id="CLU_041217_10_2_1"/>
<dbReference type="InParanoid" id="P61021"/>
<dbReference type="OMA" id="DEEGLMW"/>
<dbReference type="OrthoDB" id="63533at2759"/>
<dbReference type="PhylomeDB" id="P61021"/>
<dbReference type="TreeFam" id="TF300199"/>
<dbReference type="Reactome" id="R-MMU-6798695">
    <property type="pathway name" value="Neutrophil degranulation"/>
</dbReference>
<dbReference type="Reactome" id="R-MMU-8856828">
    <property type="pathway name" value="Clathrin-mediated endocytosis"/>
</dbReference>
<dbReference type="Reactome" id="R-MMU-8873719">
    <property type="pathway name" value="RAB geranylgeranylation"/>
</dbReference>
<dbReference type="Reactome" id="R-MMU-8876198">
    <property type="pathway name" value="RAB GEFs exchange GTP for GDP on RABs"/>
</dbReference>
<dbReference type="BioGRID-ORCS" id="19344">
    <property type="hits" value="1 hit in 75 CRISPR screens"/>
</dbReference>
<dbReference type="ChiTaRS" id="Rab5b">
    <property type="organism name" value="mouse"/>
</dbReference>
<dbReference type="PRO" id="PR:P61021"/>
<dbReference type="Proteomes" id="UP000000589">
    <property type="component" value="Chromosome 10"/>
</dbReference>
<dbReference type="RNAct" id="P61021">
    <property type="molecule type" value="protein"/>
</dbReference>
<dbReference type="Bgee" id="ENSMUSG00000000711">
    <property type="expression patterns" value="Expressed in granulocyte and 183 other cell types or tissues"/>
</dbReference>
<dbReference type="ExpressionAtlas" id="P61021">
    <property type="expression patterns" value="baseline and differential"/>
</dbReference>
<dbReference type="GO" id="GO:0031901">
    <property type="term" value="C:early endosome membrane"/>
    <property type="evidence" value="ECO:0007669"/>
    <property type="project" value="UniProtKB-SubCell"/>
</dbReference>
<dbReference type="GO" id="GO:0030139">
    <property type="term" value="C:endocytic vesicle"/>
    <property type="evidence" value="ECO:0000314"/>
    <property type="project" value="MGI"/>
</dbReference>
<dbReference type="GO" id="GO:0070062">
    <property type="term" value="C:extracellular exosome"/>
    <property type="evidence" value="ECO:0007669"/>
    <property type="project" value="Ensembl"/>
</dbReference>
<dbReference type="GO" id="GO:0042470">
    <property type="term" value="C:melanosome"/>
    <property type="evidence" value="ECO:0007669"/>
    <property type="project" value="UniProtKB-SubCell"/>
</dbReference>
<dbReference type="GO" id="GO:0005886">
    <property type="term" value="C:plasma membrane"/>
    <property type="evidence" value="ECO:0007669"/>
    <property type="project" value="UniProtKB-SubCell"/>
</dbReference>
<dbReference type="GO" id="GO:0030672">
    <property type="term" value="C:synaptic vesicle membrane"/>
    <property type="evidence" value="ECO:0007669"/>
    <property type="project" value="Ensembl"/>
</dbReference>
<dbReference type="GO" id="GO:0003925">
    <property type="term" value="F:G protein activity"/>
    <property type="evidence" value="ECO:0007669"/>
    <property type="project" value="UniProtKB-EC"/>
</dbReference>
<dbReference type="GO" id="GO:0019003">
    <property type="term" value="F:GDP binding"/>
    <property type="evidence" value="ECO:0000250"/>
    <property type="project" value="UniProtKB"/>
</dbReference>
<dbReference type="GO" id="GO:0005525">
    <property type="term" value="F:GTP binding"/>
    <property type="evidence" value="ECO:0007669"/>
    <property type="project" value="UniProtKB-KW"/>
</dbReference>
<dbReference type="GO" id="GO:0030742">
    <property type="term" value="F:GTP-dependent protein binding"/>
    <property type="evidence" value="ECO:0007669"/>
    <property type="project" value="Ensembl"/>
</dbReference>
<dbReference type="GO" id="GO:0003924">
    <property type="term" value="F:GTPase activity"/>
    <property type="evidence" value="ECO:0000304"/>
    <property type="project" value="MGI"/>
</dbReference>
<dbReference type="GO" id="GO:0019882">
    <property type="term" value="P:antigen processing and presentation"/>
    <property type="evidence" value="ECO:0007669"/>
    <property type="project" value="Ensembl"/>
</dbReference>
<dbReference type="GO" id="GO:0007032">
    <property type="term" value="P:endosome organization"/>
    <property type="evidence" value="ECO:0000314"/>
    <property type="project" value="MGI"/>
</dbReference>
<dbReference type="GO" id="GO:0048227">
    <property type="term" value="P:plasma membrane to endosome transport"/>
    <property type="evidence" value="ECO:0007669"/>
    <property type="project" value="Ensembl"/>
</dbReference>
<dbReference type="GO" id="GO:0015031">
    <property type="term" value="P:protein transport"/>
    <property type="evidence" value="ECO:0007669"/>
    <property type="project" value="UniProtKB-KW"/>
</dbReference>
<dbReference type="GO" id="GO:0030100">
    <property type="term" value="P:regulation of endocytosis"/>
    <property type="evidence" value="ECO:0000314"/>
    <property type="project" value="MGI"/>
</dbReference>
<dbReference type="CDD" id="cd01860">
    <property type="entry name" value="Rab5_related"/>
    <property type="match status" value="1"/>
</dbReference>
<dbReference type="FunFam" id="3.40.50.300:FF:000180">
    <property type="entry name" value="Member RAS oncogene family"/>
    <property type="match status" value="1"/>
</dbReference>
<dbReference type="Gene3D" id="3.40.50.300">
    <property type="entry name" value="P-loop containing nucleotide triphosphate hydrolases"/>
    <property type="match status" value="1"/>
</dbReference>
<dbReference type="InterPro" id="IPR027417">
    <property type="entry name" value="P-loop_NTPase"/>
</dbReference>
<dbReference type="InterPro" id="IPR005225">
    <property type="entry name" value="Small_GTP-bd"/>
</dbReference>
<dbReference type="InterPro" id="IPR001806">
    <property type="entry name" value="Small_GTPase"/>
</dbReference>
<dbReference type="NCBIfam" id="TIGR00231">
    <property type="entry name" value="small_GTP"/>
    <property type="match status" value="1"/>
</dbReference>
<dbReference type="PANTHER" id="PTHR47978">
    <property type="match status" value="1"/>
</dbReference>
<dbReference type="Pfam" id="PF00071">
    <property type="entry name" value="Ras"/>
    <property type="match status" value="1"/>
</dbReference>
<dbReference type="PRINTS" id="PR00449">
    <property type="entry name" value="RASTRNSFRMNG"/>
</dbReference>
<dbReference type="SMART" id="SM00175">
    <property type="entry name" value="RAB"/>
    <property type="match status" value="1"/>
</dbReference>
<dbReference type="SMART" id="SM00176">
    <property type="entry name" value="RAN"/>
    <property type="match status" value="1"/>
</dbReference>
<dbReference type="SMART" id="SM00173">
    <property type="entry name" value="RAS"/>
    <property type="match status" value="1"/>
</dbReference>
<dbReference type="SMART" id="SM00174">
    <property type="entry name" value="RHO"/>
    <property type="match status" value="1"/>
</dbReference>
<dbReference type="SUPFAM" id="SSF52540">
    <property type="entry name" value="P-loop containing nucleoside triphosphate hydrolases"/>
    <property type="match status" value="1"/>
</dbReference>
<dbReference type="PROSITE" id="PS51419">
    <property type="entry name" value="RAB"/>
    <property type="match status" value="1"/>
</dbReference>
<proteinExistence type="evidence at protein level"/>
<reference key="1">
    <citation type="journal article" date="1995" name="FEBS Lett.">
        <title>Co-operative regulation of endocytosis by three Rab5 isoforms.</title>
        <authorList>
            <person name="Bucci C."/>
            <person name="Lutcke A."/>
            <person name="Steele Mortimer O."/>
            <person name="Olkkonen V.M."/>
            <person name="Dupree P."/>
            <person name="Chiariello M."/>
            <person name="Bruni C.B."/>
            <person name="Simons K."/>
            <person name="Zerial M."/>
        </authorList>
    </citation>
    <scope>NUCLEOTIDE SEQUENCE [MRNA]</scope>
    <scope>SUBCELLULAR LOCATION</scope>
    <source>
        <tissue>Kidney</tissue>
    </source>
</reference>
<reference key="2">
    <citation type="journal article" date="2005" name="Science">
        <title>The transcriptional landscape of the mammalian genome.</title>
        <authorList>
            <person name="Carninci P."/>
            <person name="Kasukawa T."/>
            <person name="Katayama S."/>
            <person name="Gough J."/>
            <person name="Frith M.C."/>
            <person name="Maeda N."/>
            <person name="Oyama R."/>
            <person name="Ravasi T."/>
            <person name="Lenhard B."/>
            <person name="Wells C."/>
            <person name="Kodzius R."/>
            <person name="Shimokawa K."/>
            <person name="Bajic V.B."/>
            <person name="Brenner S.E."/>
            <person name="Batalov S."/>
            <person name="Forrest A.R."/>
            <person name="Zavolan M."/>
            <person name="Davis M.J."/>
            <person name="Wilming L.G."/>
            <person name="Aidinis V."/>
            <person name="Allen J.E."/>
            <person name="Ambesi-Impiombato A."/>
            <person name="Apweiler R."/>
            <person name="Aturaliya R.N."/>
            <person name="Bailey T.L."/>
            <person name="Bansal M."/>
            <person name="Baxter L."/>
            <person name="Beisel K.W."/>
            <person name="Bersano T."/>
            <person name="Bono H."/>
            <person name="Chalk A.M."/>
            <person name="Chiu K.P."/>
            <person name="Choudhary V."/>
            <person name="Christoffels A."/>
            <person name="Clutterbuck D.R."/>
            <person name="Crowe M.L."/>
            <person name="Dalla E."/>
            <person name="Dalrymple B.P."/>
            <person name="de Bono B."/>
            <person name="Della Gatta G."/>
            <person name="di Bernardo D."/>
            <person name="Down T."/>
            <person name="Engstrom P."/>
            <person name="Fagiolini M."/>
            <person name="Faulkner G."/>
            <person name="Fletcher C.F."/>
            <person name="Fukushima T."/>
            <person name="Furuno M."/>
            <person name="Futaki S."/>
            <person name="Gariboldi M."/>
            <person name="Georgii-Hemming P."/>
            <person name="Gingeras T.R."/>
            <person name="Gojobori T."/>
            <person name="Green R.E."/>
            <person name="Gustincich S."/>
            <person name="Harbers M."/>
            <person name="Hayashi Y."/>
            <person name="Hensch T.K."/>
            <person name="Hirokawa N."/>
            <person name="Hill D."/>
            <person name="Huminiecki L."/>
            <person name="Iacono M."/>
            <person name="Ikeo K."/>
            <person name="Iwama A."/>
            <person name="Ishikawa T."/>
            <person name="Jakt M."/>
            <person name="Kanapin A."/>
            <person name="Katoh M."/>
            <person name="Kawasawa Y."/>
            <person name="Kelso J."/>
            <person name="Kitamura H."/>
            <person name="Kitano H."/>
            <person name="Kollias G."/>
            <person name="Krishnan S.P."/>
            <person name="Kruger A."/>
            <person name="Kummerfeld S.K."/>
            <person name="Kurochkin I.V."/>
            <person name="Lareau L.F."/>
            <person name="Lazarevic D."/>
            <person name="Lipovich L."/>
            <person name="Liu J."/>
            <person name="Liuni S."/>
            <person name="McWilliam S."/>
            <person name="Madan Babu M."/>
            <person name="Madera M."/>
            <person name="Marchionni L."/>
            <person name="Matsuda H."/>
            <person name="Matsuzawa S."/>
            <person name="Miki H."/>
            <person name="Mignone F."/>
            <person name="Miyake S."/>
            <person name="Morris K."/>
            <person name="Mottagui-Tabar S."/>
            <person name="Mulder N."/>
            <person name="Nakano N."/>
            <person name="Nakauchi H."/>
            <person name="Ng P."/>
            <person name="Nilsson R."/>
            <person name="Nishiguchi S."/>
            <person name="Nishikawa S."/>
            <person name="Nori F."/>
            <person name="Ohara O."/>
            <person name="Okazaki Y."/>
            <person name="Orlando V."/>
            <person name="Pang K.C."/>
            <person name="Pavan W.J."/>
            <person name="Pavesi G."/>
            <person name="Pesole G."/>
            <person name="Petrovsky N."/>
            <person name="Piazza S."/>
            <person name="Reed J."/>
            <person name="Reid J.F."/>
            <person name="Ring B.Z."/>
            <person name="Ringwald M."/>
            <person name="Rost B."/>
            <person name="Ruan Y."/>
            <person name="Salzberg S.L."/>
            <person name="Sandelin A."/>
            <person name="Schneider C."/>
            <person name="Schoenbach C."/>
            <person name="Sekiguchi K."/>
            <person name="Semple C.A."/>
            <person name="Seno S."/>
            <person name="Sessa L."/>
            <person name="Sheng Y."/>
            <person name="Shibata Y."/>
            <person name="Shimada H."/>
            <person name="Shimada K."/>
            <person name="Silva D."/>
            <person name="Sinclair B."/>
            <person name="Sperling S."/>
            <person name="Stupka E."/>
            <person name="Sugiura K."/>
            <person name="Sultana R."/>
            <person name="Takenaka Y."/>
            <person name="Taki K."/>
            <person name="Tammoja K."/>
            <person name="Tan S.L."/>
            <person name="Tang S."/>
            <person name="Taylor M.S."/>
            <person name="Tegner J."/>
            <person name="Teichmann S.A."/>
            <person name="Ueda H.R."/>
            <person name="van Nimwegen E."/>
            <person name="Verardo R."/>
            <person name="Wei C.L."/>
            <person name="Yagi K."/>
            <person name="Yamanishi H."/>
            <person name="Zabarovsky E."/>
            <person name="Zhu S."/>
            <person name="Zimmer A."/>
            <person name="Hide W."/>
            <person name="Bult C."/>
            <person name="Grimmond S.M."/>
            <person name="Teasdale R.D."/>
            <person name="Liu E.T."/>
            <person name="Brusic V."/>
            <person name="Quackenbush J."/>
            <person name="Wahlestedt C."/>
            <person name="Mattick J.S."/>
            <person name="Hume D.A."/>
            <person name="Kai C."/>
            <person name="Sasaki D."/>
            <person name="Tomaru Y."/>
            <person name="Fukuda S."/>
            <person name="Kanamori-Katayama M."/>
            <person name="Suzuki M."/>
            <person name="Aoki J."/>
            <person name="Arakawa T."/>
            <person name="Iida J."/>
            <person name="Imamura K."/>
            <person name="Itoh M."/>
            <person name="Kato T."/>
            <person name="Kawaji H."/>
            <person name="Kawagashira N."/>
            <person name="Kawashima T."/>
            <person name="Kojima M."/>
            <person name="Kondo S."/>
            <person name="Konno H."/>
            <person name="Nakano K."/>
            <person name="Ninomiya N."/>
            <person name="Nishio T."/>
            <person name="Okada M."/>
            <person name="Plessy C."/>
            <person name="Shibata K."/>
            <person name="Shiraki T."/>
            <person name="Suzuki S."/>
            <person name="Tagami M."/>
            <person name="Waki K."/>
            <person name="Watahiki A."/>
            <person name="Okamura-Oho Y."/>
            <person name="Suzuki H."/>
            <person name="Kawai J."/>
            <person name="Hayashizaki Y."/>
        </authorList>
    </citation>
    <scope>NUCLEOTIDE SEQUENCE [LARGE SCALE MRNA]</scope>
    <source>
        <strain>C57BL/6J</strain>
        <tissue>Corpus striatum</tissue>
    </source>
</reference>
<reference key="3">
    <citation type="journal article" date="1992" name="Gene">
        <title>The complexity of the Rab and Rho GTP-binding protein subfamilies revealed by a PCR cloning approach.</title>
        <authorList>
            <person name="Chavrier P."/>
            <person name="Simons K."/>
            <person name="Zerial M."/>
        </authorList>
    </citation>
    <scope>NUCLEOTIDE SEQUENCE [MRNA] OF 32-80</scope>
    <source>
        <tissue>Kidney</tissue>
    </source>
</reference>
<reference key="4">
    <citation type="submission" date="2007-04" db="UniProtKB">
        <authorList>
            <person name="Lubec G."/>
            <person name="Kang S.U."/>
        </authorList>
    </citation>
    <scope>PROTEIN SEQUENCE OF 82-110</scope>
    <scope>IDENTIFICATION BY MASS SPECTROMETRY</scope>
    <source>
        <strain>C57BL/6J</strain>
        <tissue>Brain</tissue>
    </source>
</reference>
<reference key="5">
    <citation type="journal article" date="2010" name="Cell">
        <title>A tissue-specific atlas of mouse protein phosphorylation and expression.</title>
        <authorList>
            <person name="Huttlin E.L."/>
            <person name="Jedrychowski M.P."/>
            <person name="Elias J.E."/>
            <person name="Goswami T."/>
            <person name="Rad R."/>
            <person name="Beausoleil S.A."/>
            <person name="Villen J."/>
            <person name="Haas W."/>
            <person name="Sowa M.E."/>
            <person name="Gygi S.P."/>
        </authorList>
    </citation>
    <scope>IDENTIFICATION BY MASS SPECTROMETRY [LARGE SCALE ANALYSIS]</scope>
    <source>
        <tissue>Brain</tissue>
        <tissue>Brown adipose tissue</tissue>
        <tissue>Heart</tissue>
        <tissue>Kidney</tissue>
        <tissue>Liver</tissue>
        <tissue>Lung</tissue>
        <tissue>Pancreas</tissue>
        <tissue>Spleen</tissue>
        <tissue>Testis</tissue>
    </source>
</reference>
<evidence type="ECO:0000250" key="1">
    <source>
        <dbReference type="UniProtKB" id="P20339"/>
    </source>
</evidence>
<evidence type="ECO:0000250" key="2">
    <source>
        <dbReference type="UniProtKB" id="P61020"/>
    </source>
</evidence>
<evidence type="ECO:0000256" key="3">
    <source>
        <dbReference type="SAM" id="MobiDB-lite"/>
    </source>
</evidence>
<evidence type="ECO:0000305" key="4"/>
<evidence type="ECO:0000305" key="5">
    <source>
    </source>
</evidence>
<evidence type="ECO:0000312" key="6">
    <source>
        <dbReference type="MGI" id="MGI:105938"/>
    </source>
</evidence>
<organism>
    <name type="scientific">Mus musculus</name>
    <name type="common">Mouse</name>
    <dbReference type="NCBI Taxonomy" id="10090"/>
    <lineage>
        <taxon>Eukaryota</taxon>
        <taxon>Metazoa</taxon>
        <taxon>Chordata</taxon>
        <taxon>Craniata</taxon>
        <taxon>Vertebrata</taxon>
        <taxon>Euteleostomi</taxon>
        <taxon>Mammalia</taxon>
        <taxon>Eutheria</taxon>
        <taxon>Euarchontoglires</taxon>
        <taxon>Glires</taxon>
        <taxon>Rodentia</taxon>
        <taxon>Myomorpha</taxon>
        <taxon>Muroidea</taxon>
        <taxon>Muridae</taxon>
        <taxon>Murinae</taxon>
        <taxon>Mus</taxon>
        <taxon>Mus</taxon>
    </lineage>
</organism>
<sequence length="215" mass="23707">MTSRSTARPNGQPQASKICQFKLVLLGESAVGKSSLVLRFVKGQFHEYQESTIGAAFLTQSVCLDDTTVKFEIWDTAGQERYHSLAPMYYRGAQAAIVVYDITNQETFARAKTWVKELQRQASPSIVIALAGNKADLANKRMVEYEEAQAYADDNSLLFMETSAKTAMNVNDLFLAIAKKLPKSEPQNLGGAAGRSRGVDLHEQSQQNKSQCCSN</sequence>